<gene>
    <name type="primary">gdhA</name>
    <name type="synonym">gdh</name>
    <name type="ordered locus">PH1593</name>
</gene>
<comment type="catalytic activity">
    <reaction evidence="3">
        <text>L-glutamate + NAD(+) + H2O = 2-oxoglutarate + NH4(+) + NADH + H(+)</text>
        <dbReference type="Rhea" id="RHEA:15133"/>
        <dbReference type="ChEBI" id="CHEBI:15377"/>
        <dbReference type="ChEBI" id="CHEBI:15378"/>
        <dbReference type="ChEBI" id="CHEBI:16810"/>
        <dbReference type="ChEBI" id="CHEBI:28938"/>
        <dbReference type="ChEBI" id="CHEBI:29985"/>
        <dbReference type="ChEBI" id="CHEBI:57540"/>
        <dbReference type="ChEBI" id="CHEBI:57945"/>
        <dbReference type="EC" id="1.4.1.3"/>
    </reaction>
</comment>
<comment type="catalytic activity">
    <reaction evidence="3">
        <text>L-glutamate + NADP(+) + H2O = 2-oxoglutarate + NH4(+) + NADPH + H(+)</text>
        <dbReference type="Rhea" id="RHEA:11612"/>
        <dbReference type="ChEBI" id="CHEBI:15377"/>
        <dbReference type="ChEBI" id="CHEBI:15378"/>
        <dbReference type="ChEBI" id="CHEBI:16810"/>
        <dbReference type="ChEBI" id="CHEBI:28938"/>
        <dbReference type="ChEBI" id="CHEBI:29985"/>
        <dbReference type="ChEBI" id="CHEBI:57783"/>
        <dbReference type="ChEBI" id="CHEBI:58349"/>
        <dbReference type="EC" id="1.4.1.3"/>
    </reaction>
</comment>
<comment type="subunit">
    <text evidence="1">Homohexamer.</text>
</comment>
<comment type="subcellular location">
    <subcellularLocation>
        <location evidence="1">Cytoplasm</location>
    </subcellularLocation>
</comment>
<comment type="similarity">
    <text evidence="4">Belongs to the Glu/Leu/Phe/Val dehydrogenases family.</text>
</comment>
<comment type="sequence caution" evidence="4">
    <conflict type="erroneous initiation">
        <sequence resource="EMBL-CDS" id="BAA30705"/>
    </conflict>
    <text>Extended N-terminus.</text>
</comment>
<reference key="1">
    <citation type="journal article" date="1998" name="DNA Res.">
        <title>Complete sequence and gene organization of the genome of a hyper-thermophilic archaebacterium, Pyrococcus horikoshii OT3.</title>
        <authorList>
            <person name="Kawarabayasi Y."/>
            <person name="Sawada M."/>
            <person name="Horikawa H."/>
            <person name="Haikawa Y."/>
            <person name="Hino Y."/>
            <person name="Yamamoto S."/>
            <person name="Sekine M."/>
            <person name="Baba S."/>
            <person name="Kosugi H."/>
            <person name="Hosoyama A."/>
            <person name="Nagai Y."/>
            <person name="Sakai M."/>
            <person name="Ogura K."/>
            <person name="Otsuka R."/>
            <person name="Nakazawa H."/>
            <person name="Takamiya M."/>
            <person name="Ohfuku Y."/>
            <person name="Funahashi T."/>
            <person name="Tanaka T."/>
            <person name="Kudoh Y."/>
            <person name="Yamazaki J."/>
            <person name="Kushida N."/>
            <person name="Oguchi A."/>
            <person name="Aoki K."/>
            <person name="Yoshizawa T."/>
            <person name="Nakamura Y."/>
            <person name="Robb F.T."/>
            <person name="Horikoshi K."/>
            <person name="Masuchi Y."/>
            <person name="Shizuya H."/>
            <person name="Kikuchi H."/>
        </authorList>
    </citation>
    <scope>NUCLEOTIDE SEQUENCE [LARGE SCALE GENOMIC DNA]</scope>
    <source>
        <strain>ATCC 700860 / DSM 12428 / JCM 9974 / NBRC 100139 / OT-3</strain>
    </source>
</reference>
<sequence>MVEQDPFEIAVKQLERAAQHMKISEEALEFLKRPQRIVEVTIPVEMDDGSVKVFTGFRVQYNWARGPTKGGIRWHPEETLSTVKALAAWMTWKTAVMDLPYGGGKGGIIVDPKKLSDREKERLARGYIRAVYDIISPYEDIPAPDVYTNPQIMAWMMDEYETIARRKTPAFGIITGKPLSIGGSLGRNEATARGASYTIREAAKVLGWDGLKGKTIAIQGYGNAGYYLAKIMSEDYGMKVVAVSDSKGGIYNPDGLNADEVLKWKREHGSVKDFPGATNISNEELLELDVDVLAPAAIEEVITKKNADNIKAKIVAEVANGPVTPEADEILFEKGILQIPDFLCNAGGVTVSYFEWVQNITGYYWTLEEVRERLDKKMTKAFYDVYNTAKEKNIHMRDAAYVVAVQRVYQAMLDRGWVKH</sequence>
<proteinExistence type="inferred from homology"/>
<evidence type="ECO:0000250" key="1"/>
<evidence type="ECO:0000255" key="2"/>
<evidence type="ECO:0000255" key="3">
    <source>
        <dbReference type="PROSITE-ProRule" id="PRU10011"/>
    </source>
</evidence>
<evidence type="ECO:0000305" key="4"/>
<keyword id="KW-0963">Cytoplasm</keyword>
<keyword id="KW-0520">NAD</keyword>
<keyword id="KW-0521">NADP</keyword>
<keyword id="KW-0560">Oxidoreductase</keyword>
<protein>
    <recommendedName>
        <fullName>Glutamate dehydrogenase</fullName>
        <shortName>GDH</shortName>
        <ecNumber>1.4.1.3</ecNumber>
    </recommendedName>
</protein>
<feature type="chain" id="PRO_0000406991" description="Glutamate dehydrogenase">
    <location>
        <begin position="1"/>
        <end position="420"/>
    </location>
</feature>
<feature type="active site" evidence="3">
    <location>
        <position position="105"/>
    </location>
</feature>
<feature type="binding site" evidence="2">
    <location>
        <begin position="220"/>
        <end position="226"/>
    </location>
    <ligand>
        <name>NAD(+)</name>
        <dbReference type="ChEBI" id="CHEBI:57540"/>
    </ligand>
</feature>
<accession>P0CL73</accession>
<accession>O52310</accession>
<dbReference type="EC" id="1.4.1.3"/>
<dbReference type="EMBL" id="BA000001">
    <property type="protein sequence ID" value="BAA30705.1"/>
    <property type="status" value="ALT_INIT"/>
    <property type="molecule type" value="Genomic_DNA"/>
</dbReference>
<dbReference type="PIR" id="A71038">
    <property type="entry name" value="A71038"/>
</dbReference>
<dbReference type="RefSeq" id="WP_048053436.1">
    <property type="nucleotide sequence ID" value="NC_000961.1"/>
</dbReference>
<dbReference type="SMR" id="P0CL73"/>
<dbReference type="STRING" id="70601.gene:9378583"/>
<dbReference type="EnsemblBacteria" id="BAA30705">
    <property type="protein sequence ID" value="BAA30705"/>
    <property type="gene ID" value="BAA30705"/>
</dbReference>
<dbReference type="GeneID" id="1442446"/>
<dbReference type="KEGG" id="pho:PH1593"/>
<dbReference type="eggNOG" id="arCOG01352">
    <property type="taxonomic scope" value="Archaea"/>
</dbReference>
<dbReference type="OrthoDB" id="6425at2157"/>
<dbReference type="SABIO-RK" id="P0CL73"/>
<dbReference type="Proteomes" id="UP000000752">
    <property type="component" value="Chromosome"/>
</dbReference>
<dbReference type="GO" id="GO:0005737">
    <property type="term" value="C:cytoplasm"/>
    <property type="evidence" value="ECO:0007669"/>
    <property type="project" value="UniProtKB-SubCell"/>
</dbReference>
<dbReference type="GO" id="GO:0004352">
    <property type="term" value="F:glutamate dehydrogenase (NAD+) activity"/>
    <property type="evidence" value="ECO:0007669"/>
    <property type="project" value="RHEA"/>
</dbReference>
<dbReference type="GO" id="GO:0004354">
    <property type="term" value="F:glutamate dehydrogenase (NADP+) activity"/>
    <property type="evidence" value="ECO:0007669"/>
    <property type="project" value="RHEA"/>
</dbReference>
<dbReference type="GO" id="GO:0006538">
    <property type="term" value="P:glutamate catabolic process"/>
    <property type="evidence" value="ECO:0007669"/>
    <property type="project" value="TreeGrafter"/>
</dbReference>
<dbReference type="CDD" id="cd01076">
    <property type="entry name" value="NAD_bind_1_Glu_DH"/>
    <property type="match status" value="1"/>
</dbReference>
<dbReference type="FunFam" id="3.40.50.10860:FF:000003">
    <property type="entry name" value="Glutamate dehydrogenase"/>
    <property type="match status" value="1"/>
</dbReference>
<dbReference type="Gene3D" id="3.40.50.10860">
    <property type="entry name" value="Leucine Dehydrogenase, chain A, domain 1"/>
    <property type="match status" value="1"/>
</dbReference>
<dbReference type="Gene3D" id="3.40.50.720">
    <property type="entry name" value="NAD(P)-binding Rossmann-like Domain"/>
    <property type="match status" value="1"/>
</dbReference>
<dbReference type="InterPro" id="IPR046346">
    <property type="entry name" value="Aminoacid_DH-like_N_sf"/>
</dbReference>
<dbReference type="InterPro" id="IPR053388">
    <property type="entry name" value="GLPV_dehydrogenases"/>
</dbReference>
<dbReference type="InterPro" id="IPR006095">
    <property type="entry name" value="Glu/Leu/Phe/Val/Trp_DH"/>
</dbReference>
<dbReference type="InterPro" id="IPR006096">
    <property type="entry name" value="Glu/Leu/Phe/Val/Trp_DH_C"/>
</dbReference>
<dbReference type="InterPro" id="IPR006097">
    <property type="entry name" value="Glu/Leu/Phe/Val/Trp_DH_dimer"/>
</dbReference>
<dbReference type="InterPro" id="IPR033524">
    <property type="entry name" value="Glu/Leu/Phe/Val_DH_AS"/>
</dbReference>
<dbReference type="InterPro" id="IPR014362">
    <property type="entry name" value="Glu_DH"/>
</dbReference>
<dbReference type="InterPro" id="IPR036291">
    <property type="entry name" value="NAD(P)-bd_dom_sf"/>
</dbReference>
<dbReference type="InterPro" id="IPR033922">
    <property type="entry name" value="NAD_bind_Glu_DH"/>
</dbReference>
<dbReference type="NCBIfam" id="NF040817">
    <property type="entry name" value="GdhA_Arch"/>
    <property type="match status" value="1"/>
</dbReference>
<dbReference type="PANTHER" id="PTHR11606">
    <property type="entry name" value="GLUTAMATE DEHYDROGENASE"/>
    <property type="match status" value="1"/>
</dbReference>
<dbReference type="PANTHER" id="PTHR11606:SF13">
    <property type="entry name" value="GLUTAMATE DEHYDROGENASE 1, MITOCHONDRIAL"/>
    <property type="match status" value="1"/>
</dbReference>
<dbReference type="Pfam" id="PF00208">
    <property type="entry name" value="ELFV_dehydrog"/>
    <property type="match status" value="1"/>
</dbReference>
<dbReference type="Pfam" id="PF02812">
    <property type="entry name" value="ELFV_dehydrog_N"/>
    <property type="match status" value="1"/>
</dbReference>
<dbReference type="PIRSF" id="PIRSF000185">
    <property type="entry name" value="Glu_DH"/>
    <property type="match status" value="1"/>
</dbReference>
<dbReference type="PRINTS" id="PR00082">
    <property type="entry name" value="GLFDHDRGNASE"/>
</dbReference>
<dbReference type="SMART" id="SM00839">
    <property type="entry name" value="ELFV_dehydrog"/>
    <property type="match status" value="1"/>
</dbReference>
<dbReference type="SUPFAM" id="SSF53223">
    <property type="entry name" value="Aminoacid dehydrogenase-like, N-terminal domain"/>
    <property type="match status" value="1"/>
</dbReference>
<dbReference type="SUPFAM" id="SSF51735">
    <property type="entry name" value="NAD(P)-binding Rossmann-fold domains"/>
    <property type="match status" value="1"/>
</dbReference>
<dbReference type="PROSITE" id="PS00074">
    <property type="entry name" value="GLFV_DEHYDROGENASE"/>
    <property type="match status" value="1"/>
</dbReference>
<name>DHE3_PYRHO</name>
<organism>
    <name type="scientific">Pyrococcus horikoshii (strain ATCC 700860 / DSM 12428 / JCM 9974 / NBRC 100139 / OT-3)</name>
    <dbReference type="NCBI Taxonomy" id="70601"/>
    <lineage>
        <taxon>Archaea</taxon>
        <taxon>Methanobacteriati</taxon>
        <taxon>Methanobacteriota</taxon>
        <taxon>Thermococci</taxon>
        <taxon>Thermococcales</taxon>
        <taxon>Thermococcaceae</taxon>
        <taxon>Pyrococcus</taxon>
    </lineage>
</organism>